<dbReference type="EC" id="3.4.11.1" evidence="1"/>
<dbReference type="EC" id="3.4.11.10" evidence="1"/>
<dbReference type="EMBL" id="BX640448">
    <property type="protein sequence ID" value="CAE35710.1"/>
    <property type="molecule type" value="Genomic_DNA"/>
</dbReference>
<dbReference type="RefSeq" id="WP_003821370.1">
    <property type="nucleotide sequence ID" value="NC_002927.3"/>
</dbReference>
<dbReference type="SMR" id="Q7WD42"/>
<dbReference type="MEROPS" id="M17.003"/>
<dbReference type="KEGG" id="bbr:BB3736"/>
<dbReference type="eggNOG" id="COG0260">
    <property type="taxonomic scope" value="Bacteria"/>
</dbReference>
<dbReference type="HOGENOM" id="CLU_013734_2_2_4"/>
<dbReference type="Proteomes" id="UP000001027">
    <property type="component" value="Chromosome"/>
</dbReference>
<dbReference type="GO" id="GO:0005737">
    <property type="term" value="C:cytoplasm"/>
    <property type="evidence" value="ECO:0007669"/>
    <property type="project" value="UniProtKB-SubCell"/>
</dbReference>
<dbReference type="GO" id="GO:0030145">
    <property type="term" value="F:manganese ion binding"/>
    <property type="evidence" value="ECO:0007669"/>
    <property type="project" value="UniProtKB-UniRule"/>
</dbReference>
<dbReference type="GO" id="GO:0070006">
    <property type="term" value="F:metalloaminopeptidase activity"/>
    <property type="evidence" value="ECO:0007669"/>
    <property type="project" value="InterPro"/>
</dbReference>
<dbReference type="GO" id="GO:0006508">
    <property type="term" value="P:proteolysis"/>
    <property type="evidence" value="ECO:0007669"/>
    <property type="project" value="UniProtKB-KW"/>
</dbReference>
<dbReference type="CDD" id="cd00433">
    <property type="entry name" value="Peptidase_M17"/>
    <property type="match status" value="1"/>
</dbReference>
<dbReference type="FunFam" id="3.40.630.10:FF:000004">
    <property type="entry name" value="Probable cytosol aminopeptidase"/>
    <property type="match status" value="1"/>
</dbReference>
<dbReference type="Gene3D" id="3.40.220.10">
    <property type="entry name" value="Leucine Aminopeptidase, subunit E, domain 1"/>
    <property type="match status" value="1"/>
</dbReference>
<dbReference type="Gene3D" id="3.40.630.10">
    <property type="entry name" value="Zn peptidases"/>
    <property type="match status" value="1"/>
</dbReference>
<dbReference type="HAMAP" id="MF_00181">
    <property type="entry name" value="Cytosol_peptidase_M17"/>
    <property type="match status" value="1"/>
</dbReference>
<dbReference type="InterPro" id="IPR011356">
    <property type="entry name" value="Leucine_aapep/pepB"/>
</dbReference>
<dbReference type="InterPro" id="IPR043472">
    <property type="entry name" value="Macro_dom-like"/>
</dbReference>
<dbReference type="InterPro" id="IPR000819">
    <property type="entry name" value="Peptidase_M17_C"/>
</dbReference>
<dbReference type="InterPro" id="IPR023042">
    <property type="entry name" value="Peptidase_M17_leu_NH2_pept"/>
</dbReference>
<dbReference type="InterPro" id="IPR008283">
    <property type="entry name" value="Peptidase_M17_N"/>
</dbReference>
<dbReference type="NCBIfam" id="NF002074">
    <property type="entry name" value="PRK00913.1-4"/>
    <property type="match status" value="1"/>
</dbReference>
<dbReference type="PANTHER" id="PTHR11963:SF23">
    <property type="entry name" value="CYTOSOL AMINOPEPTIDASE"/>
    <property type="match status" value="1"/>
</dbReference>
<dbReference type="PANTHER" id="PTHR11963">
    <property type="entry name" value="LEUCINE AMINOPEPTIDASE-RELATED"/>
    <property type="match status" value="1"/>
</dbReference>
<dbReference type="Pfam" id="PF00883">
    <property type="entry name" value="Peptidase_M17"/>
    <property type="match status" value="1"/>
</dbReference>
<dbReference type="Pfam" id="PF02789">
    <property type="entry name" value="Peptidase_M17_N"/>
    <property type="match status" value="1"/>
</dbReference>
<dbReference type="PRINTS" id="PR00481">
    <property type="entry name" value="LAMNOPPTDASE"/>
</dbReference>
<dbReference type="SUPFAM" id="SSF52949">
    <property type="entry name" value="Macro domain-like"/>
    <property type="match status" value="1"/>
</dbReference>
<dbReference type="SUPFAM" id="SSF53187">
    <property type="entry name" value="Zn-dependent exopeptidases"/>
    <property type="match status" value="1"/>
</dbReference>
<dbReference type="PROSITE" id="PS00631">
    <property type="entry name" value="CYTOSOL_AP"/>
    <property type="match status" value="1"/>
</dbReference>
<accession>Q7WD42</accession>
<evidence type="ECO:0000255" key="1">
    <source>
        <dbReference type="HAMAP-Rule" id="MF_00181"/>
    </source>
</evidence>
<sequence>MEFSTQTTASLHQIKTAALAVGVFADGVLSAAAEVIDRASHGAVAAVVKSEFRGRTGSTLVLRSLAGVSAQRVVLVGLGKQAEYNARAHASAEQAFAAACVAAQVGEGVSTLAGVAIEGVPVRARARSAAIAAGAAAYHYDATFGKANRDARPRLKKIVQVVDRAASAQAQLGLREGAAIAHGMELTRTLGNLPGNVCTPAYLGNTAKKLAREFKSLKVEVLERKQVEALGMGSFLSVARGSEEPLRFIVLRHAGKPAKKDKAGPVVLVGKGITFDAGGISLKPAATMDEMKYDMCGAASVLGTFRALAELELPLDVVGLIAACENLPSGKANKPGDVVTSMSGQTIEILNTDAEGRLVLCDALTYAERFKPAAVIDIATLTGACVVALGNVNSGLFSKDDALADALLAASRQSLDPAWRLPLDDAYQDQLKSNFADIANIGGPPAGAVTAACFLSRFTKAYPWAHLDIAGTAWRGGKDKGATGRPVPLLMQYLLDQAG</sequence>
<name>AMPA_BORBR</name>
<reference key="1">
    <citation type="journal article" date="2003" name="Nat. Genet.">
        <title>Comparative analysis of the genome sequences of Bordetella pertussis, Bordetella parapertussis and Bordetella bronchiseptica.</title>
        <authorList>
            <person name="Parkhill J."/>
            <person name="Sebaihia M."/>
            <person name="Preston A."/>
            <person name="Murphy L.D."/>
            <person name="Thomson N.R."/>
            <person name="Harris D.E."/>
            <person name="Holden M.T.G."/>
            <person name="Churcher C.M."/>
            <person name="Bentley S.D."/>
            <person name="Mungall K.L."/>
            <person name="Cerdeno-Tarraga A.-M."/>
            <person name="Temple L."/>
            <person name="James K.D."/>
            <person name="Harris B."/>
            <person name="Quail M.A."/>
            <person name="Achtman M."/>
            <person name="Atkin R."/>
            <person name="Baker S."/>
            <person name="Basham D."/>
            <person name="Bason N."/>
            <person name="Cherevach I."/>
            <person name="Chillingworth T."/>
            <person name="Collins M."/>
            <person name="Cronin A."/>
            <person name="Davis P."/>
            <person name="Doggett J."/>
            <person name="Feltwell T."/>
            <person name="Goble A."/>
            <person name="Hamlin N."/>
            <person name="Hauser H."/>
            <person name="Holroyd S."/>
            <person name="Jagels K."/>
            <person name="Leather S."/>
            <person name="Moule S."/>
            <person name="Norberczak H."/>
            <person name="O'Neil S."/>
            <person name="Ormond D."/>
            <person name="Price C."/>
            <person name="Rabbinowitsch E."/>
            <person name="Rutter S."/>
            <person name="Sanders M."/>
            <person name="Saunders D."/>
            <person name="Seeger K."/>
            <person name="Sharp S."/>
            <person name="Simmonds M."/>
            <person name="Skelton J."/>
            <person name="Squares R."/>
            <person name="Squares S."/>
            <person name="Stevens K."/>
            <person name="Unwin L."/>
            <person name="Whitehead S."/>
            <person name="Barrell B.G."/>
            <person name="Maskell D.J."/>
        </authorList>
    </citation>
    <scope>NUCLEOTIDE SEQUENCE [LARGE SCALE GENOMIC DNA]</scope>
    <source>
        <strain>ATCC BAA-588 / NCTC 13252 / RB50</strain>
    </source>
</reference>
<protein>
    <recommendedName>
        <fullName evidence="1">Probable cytosol aminopeptidase</fullName>
        <ecNumber evidence="1">3.4.11.1</ecNumber>
    </recommendedName>
    <alternativeName>
        <fullName evidence="1">Leucine aminopeptidase</fullName>
        <shortName evidence="1">LAP</shortName>
        <ecNumber evidence="1">3.4.11.10</ecNumber>
    </alternativeName>
    <alternativeName>
        <fullName evidence="1">Leucyl aminopeptidase</fullName>
    </alternativeName>
</protein>
<feature type="chain" id="PRO_0000165724" description="Probable cytosol aminopeptidase">
    <location>
        <begin position="1"/>
        <end position="499"/>
    </location>
</feature>
<feature type="active site" evidence="1">
    <location>
        <position position="283"/>
    </location>
</feature>
<feature type="active site" evidence="1">
    <location>
        <position position="357"/>
    </location>
</feature>
<feature type="binding site" evidence="1">
    <location>
        <position position="271"/>
    </location>
    <ligand>
        <name>Mn(2+)</name>
        <dbReference type="ChEBI" id="CHEBI:29035"/>
        <label>2</label>
    </ligand>
</feature>
<feature type="binding site" evidence="1">
    <location>
        <position position="276"/>
    </location>
    <ligand>
        <name>Mn(2+)</name>
        <dbReference type="ChEBI" id="CHEBI:29035"/>
        <label>1</label>
    </ligand>
</feature>
<feature type="binding site" evidence="1">
    <location>
        <position position="276"/>
    </location>
    <ligand>
        <name>Mn(2+)</name>
        <dbReference type="ChEBI" id="CHEBI:29035"/>
        <label>2</label>
    </ligand>
</feature>
<feature type="binding site" evidence="1">
    <location>
        <position position="294"/>
    </location>
    <ligand>
        <name>Mn(2+)</name>
        <dbReference type="ChEBI" id="CHEBI:29035"/>
        <label>2</label>
    </ligand>
</feature>
<feature type="binding site" evidence="1">
    <location>
        <position position="353"/>
    </location>
    <ligand>
        <name>Mn(2+)</name>
        <dbReference type="ChEBI" id="CHEBI:29035"/>
        <label>1</label>
    </ligand>
</feature>
<feature type="binding site" evidence="1">
    <location>
        <position position="355"/>
    </location>
    <ligand>
        <name>Mn(2+)</name>
        <dbReference type="ChEBI" id="CHEBI:29035"/>
        <label>1</label>
    </ligand>
</feature>
<feature type="binding site" evidence="1">
    <location>
        <position position="355"/>
    </location>
    <ligand>
        <name>Mn(2+)</name>
        <dbReference type="ChEBI" id="CHEBI:29035"/>
        <label>2</label>
    </ligand>
</feature>
<comment type="function">
    <text evidence="1">Presumably involved in the processing and regular turnover of intracellular proteins. Catalyzes the removal of unsubstituted N-terminal amino acids from various peptides.</text>
</comment>
<comment type="catalytic activity">
    <reaction evidence="1">
        <text>Release of an N-terminal amino acid, Xaa-|-Yaa-, in which Xaa is preferably Leu, but may be other amino acids including Pro although not Arg or Lys, and Yaa may be Pro. Amino acid amides and methyl esters are also readily hydrolyzed, but rates on arylamides are exceedingly low.</text>
        <dbReference type="EC" id="3.4.11.1"/>
    </reaction>
</comment>
<comment type="catalytic activity">
    <reaction evidence="1">
        <text>Release of an N-terminal amino acid, preferentially leucine, but not glutamic or aspartic acids.</text>
        <dbReference type="EC" id="3.4.11.10"/>
    </reaction>
</comment>
<comment type="cofactor">
    <cofactor evidence="1">
        <name>Mn(2+)</name>
        <dbReference type="ChEBI" id="CHEBI:29035"/>
    </cofactor>
    <text evidence="1">Binds 2 manganese ions per subunit.</text>
</comment>
<comment type="subcellular location">
    <subcellularLocation>
        <location evidence="1">Cytoplasm</location>
    </subcellularLocation>
</comment>
<comment type="similarity">
    <text evidence="1">Belongs to the peptidase M17 family.</text>
</comment>
<proteinExistence type="inferred from homology"/>
<organism>
    <name type="scientific">Bordetella bronchiseptica (strain ATCC BAA-588 / NCTC 13252 / RB50)</name>
    <name type="common">Alcaligenes bronchisepticus</name>
    <dbReference type="NCBI Taxonomy" id="257310"/>
    <lineage>
        <taxon>Bacteria</taxon>
        <taxon>Pseudomonadati</taxon>
        <taxon>Pseudomonadota</taxon>
        <taxon>Betaproteobacteria</taxon>
        <taxon>Burkholderiales</taxon>
        <taxon>Alcaligenaceae</taxon>
        <taxon>Bordetella</taxon>
    </lineage>
</organism>
<keyword id="KW-0031">Aminopeptidase</keyword>
<keyword id="KW-0963">Cytoplasm</keyword>
<keyword id="KW-0378">Hydrolase</keyword>
<keyword id="KW-0464">Manganese</keyword>
<keyword id="KW-0479">Metal-binding</keyword>
<keyword id="KW-0645">Protease</keyword>
<gene>
    <name evidence="1" type="primary">pepA</name>
    <name type="ordered locus">BB3736</name>
</gene>